<organism>
    <name type="scientific">Nicotiana benthamiana</name>
    <dbReference type="NCBI Taxonomy" id="4100"/>
    <lineage>
        <taxon>Eukaryota</taxon>
        <taxon>Viridiplantae</taxon>
        <taxon>Streptophyta</taxon>
        <taxon>Embryophyta</taxon>
        <taxon>Tracheophyta</taxon>
        <taxon>Spermatophyta</taxon>
        <taxon>Magnoliopsida</taxon>
        <taxon>eudicotyledons</taxon>
        <taxon>Gunneridae</taxon>
        <taxon>Pentapetalae</taxon>
        <taxon>asterids</taxon>
        <taxon>lamiids</taxon>
        <taxon>Solanales</taxon>
        <taxon>Solanaceae</taxon>
        <taxon>Nicotianoideae</taxon>
        <taxon>Nicotianeae</taxon>
        <taxon>Nicotiana</taxon>
    </lineage>
</organism>
<sequence length="935" mass="103416">MKLHTLNPQTPLTQSKPMAFSTGITPSRFSGLRKTSSELRFLSSVTPPPRKQLRPVSARRKEEEVGDEGNGSVILRDRGENEDRNGGERVVLTELHKEATEAYMSYAMSVLLGRALPDVRDGLKPVHRRILYAMHELGLSSKKPYKKCARVVGEVLGKFHPHGDTAVYDSLVRMAQDFSLRSPLIRGHGNFGSIDADPPAAMRYTECRLEALTESMLLADLEQNTVDFVPNFDNSQKEPSLLPARVPNLLLNGASGIAVGMATNIPPHNLGELVDALSALIHNPEATLQELLEYMPGPDFPTGGIIMGNIGILEAFRTGRGRVVIRGKTDIELLDSKTKRAAIIIQEIPYQTNKASLVEKIADLVENKILEGVSDIRDESDRSGMRIVIELKRGSDPAIVLNNLYRLTALQSSFSCNMVGILNGQPKLMGLKELLQAFLDFRCSVVERRARFKLSQAQERNHIVEGIIVGLDNLDEVINTIRKASSNALAAASLRKEFELSEKQAEAILDISLRRLTALERNKFVEEGKSLRTQISKLEELLSSKKQILQLIEEEAIEIKNKFFNPRRSMLEDTDSGDLEDIDVIPNEEMLLAISEKGYVKRMKPDTFNLQNRGTIGKSVGKLRVNDAMSDFLVCRAHDKVLYFSDKGTVYSSPAYKIPECSRTAAGTPLVQILSLSDGERITSIIPVSEFAADQYLVMLTVNGYIKKVSLNYFASIRCTGIIAIQLVPDDELKWVKCCSNNDFVAMASQNGMVILTPCANIRALGRNTRGSVAMRLKEGDKVASMDIIPDALQKELDKTLEVQQRQYRSMKGPWLLFVSESGYGKRVPVSRFRTSPLNRVGLFGYKFSSEDCLAAVFVVGFSLGEDGESDEQVVLVSQSGTVNRIKVRDISIQSRYARGVILMRLEHAGKIQSASLISAADADPEDEDATAVAA</sequence>
<keyword id="KW-0067">ATP-binding</keyword>
<keyword id="KW-0150">Chloroplast</keyword>
<keyword id="KW-0238">DNA-binding</keyword>
<keyword id="KW-0413">Isomerase</keyword>
<keyword id="KW-0496">Mitochondrion</keyword>
<keyword id="KW-0547">Nucleotide-binding</keyword>
<keyword id="KW-0934">Plastid</keyword>
<keyword id="KW-0799">Topoisomerase</keyword>
<keyword id="KW-0809">Transit peptide</keyword>
<reference key="1">
    <citation type="journal article" date="2004" name="Plant Cell">
        <title>DNA gyrase is involved in chloroplast nucleoid partitioning.</title>
        <authorList>
            <person name="Cho H.S."/>
            <person name="Lee S.S."/>
            <person name="Kim K.D."/>
            <person name="Hwang I."/>
            <person name="Lim J.-S."/>
            <person name="Park Y.-I."/>
            <person name="Pai H.-S."/>
        </authorList>
    </citation>
    <scope>NUCLEOTIDE SEQUENCE [MRNA]</scope>
    <scope>FUNCTION</scope>
    <scope>SUBCELLULAR LOCATION</scope>
    <scope>TISSUE SPECIFICITY</scope>
    <scope>DEVELOPMENTAL STAGE</scope>
</reference>
<name>GYRA_NICBE</name>
<gene>
    <name type="primary">GYRA</name>
</gene>
<dbReference type="EC" id="5.6.2.2" evidence="3"/>
<dbReference type="EMBL" id="AY351386">
    <property type="protein sequence ID" value="AAR07942.1"/>
    <property type="molecule type" value="mRNA"/>
</dbReference>
<dbReference type="SMR" id="Q5YLB5"/>
<dbReference type="GO" id="GO:0009507">
    <property type="term" value="C:chloroplast"/>
    <property type="evidence" value="ECO:0007669"/>
    <property type="project" value="UniProtKB-SubCell"/>
</dbReference>
<dbReference type="GO" id="GO:0005694">
    <property type="term" value="C:chromosome"/>
    <property type="evidence" value="ECO:0007669"/>
    <property type="project" value="InterPro"/>
</dbReference>
<dbReference type="GO" id="GO:0009330">
    <property type="term" value="C:DNA topoisomerase type II (double strand cut, ATP-hydrolyzing) complex"/>
    <property type="evidence" value="ECO:0007669"/>
    <property type="project" value="TreeGrafter"/>
</dbReference>
<dbReference type="GO" id="GO:0005739">
    <property type="term" value="C:mitochondrion"/>
    <property type="evidence" value="ECO:0007669"/>
    <property type="project" value="UniProtKB-SubCell"/>
</dbReference>
<dbReference type="GO" id="GO:0005524">
    <property type="term" value="F:ATP binding"/>
    <property type="evidence" value="ECO:0007669"/>
    <property type="project" value="UniProtKB-KW"/>
</dbReference>
<dbReference type="GO" id="GO:0003677">
    <property type="term" value="F:DNA binding"/>
    <property type="evidence" value="ECO:0007669"/>
    <property type="project" value="UniProtKB-KW"/>
</dbReference>
<dbReference type="GO" id="GO:0003918">
    <property type="term" value="F:DNA topoisomerase type II (double strand cut, ATP-hydrolyzing) activity"/>
    <property type="evidence" value="ECO:0007669"/>
    <property type="project" value="UniProtKB-EC"/>
</dbReference>
<dbReference type="GO" id="GO:0006265">
    <property type="term" value="P:DNA topological change"/>
    <property type="evidence" value="ECO:0007669"/>
    <property type="project" value="InterPro"/>
</dbReference>
<dbReference type="CDD" id="cd00187">
    <property type="entry name" value="TOP4c"/>
    <property type="match status" value="1"/>
</dbReference>
<dbReference type="FunFam" id="1.10.268.10:FF:000001">
    <property type="entry name" value="DNA gyrase subunit A"/>
    <property type="match status" value="1"/>
</dbReference>
<dbReference type="FunFam" id="2.120.10.90:FF:000007">
    <property type="entry name" value="DNA gyrase subunit A"/>
    <property type="match status" value="1"/>
</dbReference>
<dbReference type="FunFam" id="3.30.1360.40:FF:000002">
    <property type="entry name" value="DNA gyrase subunit A"/>
    <property type="match status" value="1"/>
</dbReference>
<dbReference type="FunFam" id="3.90.199.10:FF:000001">
    <property type="entry name" value="DNA gyrase subunit A"/>
    <property type="match status" value="1"/>
</dbReference>
<dbReference type="Gene3D" id="3.30.1360.40">
    <property type="match status" value="1"/>
</dbReference>
<dbReference type="Gene3D" id="2.120.10.90">
    <property type="entry name" value="DNA gyrase/topoisomerase IV, subunit A, C-terminal"/>
    <property type="match status" value="1"/>
</dbReference>
<dbReference type="Gene3D" id="3.90.199.10">
    <property type="entry name" value="Topoisomerase II, domain 5"/>
    <property type="match status" value="1"/>
</dbReference>
<dbReference type="Gene3D" id="1.10.268.10">
    <property type="entry name" value="Topoisomerase, domain 3"/>
    <property type="match status" value="1"/>
</dbReference>
<dbReference type="HAMAP" id="MF_01897">
    <property type="entry name" value="GyrA"/>
    <property type="match status" value="1"/>
</dbReference>
<dbReference type="InterPro" id="IPR005743">
    <property type="entry name" value="GyrA"/>
</dbReference>
<dbReference type="InterPro" id="IPR006691">
    <property type="entry name" value="GyrA/parC_rep"/>
</dbReference>
<dbReference type="InterPro" id="IPR035516">
    <property type="entry name" value="Gyrase/topoIV_suA_C"/>
</dbReference>
<dbReference type="InterPro" id="IPR013760">
    <property type="entry name" value="Topo_IIA-like_dom_sf"/>
</dbReference>
<dbReference type="InterPro" id="IPR013758">
    <property type="entry name" value="Topo_IIA_A/C_ab"/>
</dbReference>
<dbReference type="InterPro" id="IPR013757">
    <property type="entry name" value="Topo_IIA_A_a_sf"/>
</dbReference>
<dbReference type="InterPro" id="IPR002205">
    <property type="entry name" value="Topo_IIA_dom_A"/>
</dbReference>
<dbReference type="InterPro" id="IPR050220">
    <property type="entry name" value="Type_II_DNA_Topoisomerases"/>
</dbReference>
<dbReference type="NCBIfam" id="TIGR01063">
    <property type="entry name" value="gyrA"/>
    <property type="match status" value="1"/>
</dbReference>
<dbReference type="NCBIfam" id="NF004043">
    <property type="entry name" value="PRK05560.1"/>
    <property type="match status" value="1"/>
</dbReference>
<dbReference type="NCBIfam" id="NF004044">
    <property type="entry name" value="PRK05561.1"/>
    <property type="match status" value="1"/>
</dbReference>
<dbReference type="PANTHER" id="PTHR43493:SF5">
    <property type="entry name" value="DNA GYRASE SUBUNIT A, CHLOROPLASTIC_MITOCHONDRIAL"/>
    <property type="match status" value="1"/>
</dbReference>
<dbReference type="PANTHER" id="PTHR43493">
    <property type="entry name" value="DNA GYRASE/TOPOISOMERASE SUBUNIT A"/>
    <property type="match status" value="1"/>
</dbReference>
<dbReference type="Pfam" id="PF03989">
    <property type="entry name" value="DNA_gyraseA_C"/>
    <property type="match status" value="6"/>
</dbReference>
<dbReference type="Pfam" id="PF00521">
    <property type="entry name" value="DNA_topoisoIV"/>
    <property type="match status" value="1"/>
</dbReference>
<dbReference type="SMART" id="SM00434">
    <property type="entry name" value="TOP4c"/>
    <property type="match status" value="1"/>
</dbReference>
<dbReference type="SUPFAM" id="SSF101904">
    <property type="entry name" value="GyrA/ParC C-terminal domain-like"/>
    <property type="match status" value="1"/>
</dbReference>
<dbReference type="SUPFAM" id="SSF56719">
    <property type="entry name" value="Type II DNA topoisomerase"/>
    <property type="match status" value="1"/>
</dbReference>
<dbReference type="PROSITE" id="PS52040">
    <property type="entry name" value="TOPO_IIA"/>
    <property type="match status" value="1"/>
</dbReference>
<proteinExistence type="evidence at transcript level"/>
<comment type="function">
    <text evidence="5">A type II topoisomerase that seems to play a critical role in chloroplast nucleoid partitioning by regulating DNA topology. DNA gyrase negatively supercoils closed circular double-stranded DNA in an ATP-dependent manner.</text>
</comment>
<comment type="catalytic activity">
    <reaction evidence="3">
        <text>ATP-dependent breakage, passage and rejoining of double-stranded DNA.</text>
        <dbReference type="EC" id="5.6.2.2"/>
    </reaction>
</comment>
<comment type="subunit">
    <text evidence="2">Made up of two chains. The A chain is responsible for DNA breakage and rejoining; the B chain catalyzes ATP hydrolysis.</text>
</comment>
<comment type="subcellular location">
    <subcellularLocation>
        <location evidence="5">Plastid</location>
        <location evidence="5">Chloroplast</location>
    </subcellularLocation>
    <subcellularLocation>
        <location evidence="5">Mitochondrion</location>
    </subcellularLocation>
</comment>
<comment type="tissue specificity">
    <text evidence="5">Ubiquitous.</text>
</comment>
<comment type="developmental stage">
    <text evidence="5">Up-regulated during seed germination and leaf expansion.</text>
</comment>
<comment type="similarity">
    <text evidence="1">Belongs to the type II topoisomerase GyrA/ParC subunit family.</text>
</comment>
<evidence type="ECO:0000250" key="1">
    <source>
        <dbReference type="UniProtKB" id="P0AES4"/>
    </source>
</evidence>
<evidence type="ECO:0000250" key="2">
    <source>
        <dbReference type="UniProtKB" id="Q9CAF6"/>
    </source>
</evidence>
<evidence type="ECO:0000255" key="3">
    <source>
        <dbReference type="PROSITE-ProRule" id="PRU01384"/>
    </source>
</evidence>
<evidence type="ECO:0000256" key="4">
    <source>
        <dbReference type="SAM" id="MobiDB-lite"/>
    </source>
</evidence>
<evidence type="ECO:0000269" key="5">
    <source>
    </source>
</evidence>
<feature type="transit peptide" description="Chloroplast and mitochondrion">
    <location>
        <begin position="1"/>
        <end status="unknown"/>
    </location>
</feature>
<feature type="chain" id="PRO_0000247946" description="DNA gyrase subunit A, chloroplastic/mitochondrial">
    <location>
        <begin status="unknown"/>
        <end position="935"/>
    </location>
</feature>
<feature type="domain" description="Topo IIA-type catalytic" evidence="3">
    <location>
        <begin position="116"/>
        <end position="584"/>
    </location>
</feature>
<feature type="region of interest" description="Disordered" evidence="4">
    <location>
        <begin position="1"/>
        <end position="29"/>
    </location>
</feature>
<feature type="region of interest" description="Disordered" evidence="4">
    <location>
        <begin position="44"/>
        <end position="85"/>
    </location>
</feature>
<feature type="short sequence motif" description="GyrA-box" evidence="1">
    <location>
        <begin position="611"/>
        <end position="617"/>
    </location>
</feature>
<feature type="compositionally biased region" description="Polar residues" evidence="4">
    <location>
        <begin position="1"/>
        <end position="28"/>
    </location>
</feature>
<feature type="compositionally biased region" description="Basic and acidic residues" evidence="4">
    <location>
        <begin position="75"/>
        <end position="85"/>
    </location>
</feature>
<feature type="active site" description="O-(5'-phospho-DNA)-tyrosine intermediate" evidence="3">
    <location>
        <position position="204"/>
    </location>
</feature>
<accession>Q5YLB5</accession>
<protein>
    <recommendedName>
        <fullName>DNA gyrase subunit A, chloroplastic/mitochondrial</fullName>
        <ecNumber evidence="3">5.6.2.2</ecNumber>
    </recommendedName>
</protein>